<organism>
    <name type="scientific">Staphylococcus aureus (strain N315)</name>
    <dbReference type="NCBI Taxonomy" id="158879"/>
    <lineage>
        <taxon>Bacteria</taxon>
        <taxon>Bacillati</taxon>
        <taxon>Bacillota</taxon>
        <taxon>Bacilli</taxon>
        <taxon>Bacillales</taxon>
        <taxon>Staphylococcaceae</taxon>
        <taxon>Staphylococcus</taxon>
    </lineage>
</organism>
<keyword id="KW-0665">Pyrimidine biosynthesis</keyword>
<keyword id="KW-0808">Transferase</keyword>
<sequence length="293" mass="33258">MNHLLSMEHLSTDQIYKLIQKASQFKSGERQLPNFEGKYVANLFFENSTRTKCSFEMAELKLGLKTISFETSTSSVSKGESLYDTCKTLESIGCDLLVIRHPFNNYYEKLANINIPIANAGDGSGQHPTQSLLDLMTIYEEYGYFEGLNVLICGDIKNSRVARSNYHSLKALGANVMFNSPNAWIDDSLEAPYVNIDDVIETVDIVMLLRIQHERHGLAEETRFAADDYHQKHGLNEVRYNKLQEHAIVMHPAPVNRGVEIQSDLVEASKSRIFKQMENGVYLRMAVIDELLK</sequence>
<accession>P65618</accession>
<accession>Q99UR8</accession>
<feature type="chain" id="PRO_0000113195" description="Aspartate carbamoyltransferase catalytic subunit">
    <location>
        <begin position="1"/>
        <end position="293"/>
    </location>
</feature>
<feature type="binding site" evidence="1">
    <location>
        <position position="50"/>
    </location>
    <ligand>
        <name>carbamoyl phosphate</name>
        <dbReference type="ChEBI" id="CHEBI:58228"/>
    </ligand>
</feature>
<feature type="binding site" evidence="1">
    <location>
        <position position="51"/>
    </location>
    <ligand>
        <name>carbamoyl phosphate</name>
        <dbReference type="ChEBI" id="CHEBI:58228"/>
    </ligand>
</feature>
<feature type="binding site" evidence="1">
    <location>
        <position position="78"/>
    </location>
    <ligand>
        <name>L-aspartate</name>
        <dbReference type="ChEBI" id="CHEBI:29991"/>
    </ligand>
</feature>
<feature type="binding site" evidence="1">
    <location>
        <position position="100"/>
    </location>
    <ligand>
        <name>carbamoyl phosphate</name>
        <dbReference type="ChEBI" id="CHEBI:58228"/>
    </ligand>
</feature>
<feature type="binding site" evidence="1">
    <location>
        <position position="127"/>
    </location>
    <ligand>
        <name>carbamoyl phosphate</name>
        <dbReference type="ChEBI" id="CHEBI:58228"/>
    </ligand>
</feature>
<feature type="binding site" evidence="1">
    <location>
        <position position="130"/>
    </location>
    <ligand>
        <name>carbamoyl phosphate</name>
        <dbReference type="ChEBI" id="CHEBI:58228"/>
    </ligand>
</feature>
<feature type="binding site" evidence="1">
    <location>
        <position position="160"/>
    </location>
    <ligand>
        <name>L-aspartate</name>
        <dbReference type="ChEBI" id="CHEBI:29991"/>
    </ligand>
</feature>
<feature type="binding site" evidence="1">
    <location>
        <position position="210"/>
    </location>
    <ligand>
        <name>L-aspartate</name>
        <dbReference type="ChEBI" id="CHEBI:29991"/>
    </ligand>
</feature>
<feature type="binding site" evidence="1">
    <location>
        <position position="253"/>
    </location>
    <ligand>
        <name>carbamoyl phosphate</name>
        <dbReference type="ChEBI" id="CHEBI:58228"/>
    </ligand>
</feature>
<feature type="binding site" evidence="1">
    <location>
        <position position="254"/>
    </location>
    <ligand>
        <name>carbamoyl phosphate</name>
        <dbReference type="ChEBI" id="CHEBI:58228"/>
    </ligand>
</feature>
<name>PYRB_STAAN</name>
<proteinExistence type="evidence at protein level"/>
<comment type="function">
    <text evidence="1">Catalyzes the condensation of carbamoyl phosphate and aspartate to form carbamoyl aspartate and inorganic phosphate, the committed step in the de novo pyrimidine nucleotide biosynthesis pathway.</text>
</comment>
<comment type="catalytic activity">
    <reaction evidence="1">
        <text>carbamoyl phosphate + L-aspartate = N-carbamoyl-L-aspartate + phosphate + H(+)</text>
        <dbReference type="Rhea" id="RHEA:20013"/>
        <dbReference type="ChEBI" id="CHEBI:15378"/>
        <dbReference type="ChEBI" id="CHEBI:29991"/>
        <dbReference type="ChEBI" id="CHEBI:32814"/>
        <dbReference type="ChEBI" id="CHEBI:43474"/>
        <dbReference type="ChEBI" id="CHEBI:58228"/>
        <dbReference type="EC" id="2.1.3.2"/>
    </reaction>
</comment>
<comment type="pathway">
    <text evidence="1">Pyrimidine metabolism; UMP biosynthesis via de novo pathway; (S)-dihydroorotate from bicarbonate: step 2/3.</text>
</comment>
<comment type="subunit">
    <text evidence="1">Heterododecamer (2C3:3R2) of six catalytic PyrB chains organized as two trimers (C3), and six regulatory PyrI chains organized as three dimers (R2).</text>
</comment>
<comment type="similarity">
    <text evidence="1">Belongs to the aspartate/ornithine carbamoyltransferase superfamily. ATCase family.</text>
</comment>
<evidence type="ECO:0000255" key="1">
    <source>
        <dbReference type="HAMAP-Rule" id="MF_00001"/>
    </source>
</evidence>
<gene>
    <name evidence="1" type="primary">pyrB</name>
    <name type="ordered locus">SA1043</name>
</gene>
<protein>
    <recommendedName>
        <fullName evidence="1">Aspartate carbamoyltransferase catalytic subunit</fullName>
        <ecNumber evidence="1">2.1.3.2</ecNumber>
    </recommendedName>
    <alternativeName>
        <fullName evidence="1">Aspartate transcarbamylase</fullName>
        <shortName evidence="1">ATCase</shortName>
    </alternativeName>
</protein>
<dbReference type="EC" id="2.1.3.2" evidence="1"/>
<dbReference type="EMBL" id="BA000018">
    <property type="protein sequence ID" value="BAB42295.1"/>
    <property type="molecule type" value="Genomic_DNA"/>
</dbReference>
<dbReference type="PIR" id="C89892">
    <property type="entry name" value="C89892"/>
</dbReference>
<dbReference type="RefSeq" id="WP_001016166.1">
    <property type="nucleotide sequence ID" value="NC_002745.2"/>
</dbReference>
<dbReference type="SMR" id="P65618"/>
<dbReference type="EnsemblBacteria" id="BAB42295">
    <property type="protein sequence ID" value="BAB42295"/>
    <property type="gene ID" value="BAB42295"/>
</dbReference>
<dbReference type="KEGG" id="sau:SA1043"/>
<dbReference type="HOGENOM" id="CLU_043846_2_1_9"/>
<dbReference type="UniPathway" id="UPA00070">
    <property type="reaction ID" value="UER00116"/>
</dbReference>
<dbReference type="GO" id="GO:0005829">
    <property type="term" value="C:cytosol"/>
    <property type="evidence" value="ECO:0007669"/>
    <property type="project" value="TreeGrafter"/>
</dbReference>
<dbReference type="GO" id="GO:0016597">
    <property type="term" value="F:amino acid binding"/>
    <property type="evidence" value="ECO:0007669"/>
    <property type="project" value="InterPro"/>
</dbReference>
<dbReference type="GO" id="GO:0004070">
    <property type="term" value="F:aspartate carbamoyltransferase activity"/>
    <property type="evidence" value="ECO:0007669"/>
    <property type="project" value="UniProtKB-UniRule"/>
</dbReference>
<dbReference type="GO" id="GO:0006207">
    <property type="term" value="P:'de novo' pyrimidine nucleobase biosynthetic process"/>
    <property type="evidence" value="ECO:0007669"/>
    <property type="project" value="InterPro"/>
</dbReference>
<dbReference type="GO" id="GO:0044205">
    <property type="term" value="P:'de novo' UMP biosynthetic process"/>
    <property type="evidence" value="ECO:0007669"/>
    <property type="project" value="UniProtKB-UniRule"/>
</dbReference>
<dbReference type="GO" id="GO:0006520">
    <property type="term" value="P:amino acid metabolic process"/>
    <property type="evidence" value="ECO:0007669"/>
    <property type="project" value="InterPro"/>
</dbReference>
<dbReference type="FunFam" id="3.40.50.1370:FF:000011">
    <property type="entry name" value="Aspartate carbamoyltransferase"/>
    <property type="match status" value="1"/>
</dbReference>
<dbReference type="Gene3D" id="3.40.50.1370">
    <property type="entry name" value="Aspartate/ornithine carbamoyltransferase"/>
    <property type="match status" value="2"/>
</dbReference>
<dbReference type="HAMAP" id="MF_00001">
    <property type="entry name" value="Asp_carb_tr"/>
    <property type="match status" value="1"/>
</dbReference>
<dbReference type="InterPro" id="IPR006132">
    <property type="entry name" value="Asp/Orn_carbamoyltranf_P-bd"/>
</dbReference>
<dbReference type="InterPro" id="IPR006130">
    <property type="entry name" value="Asp/Orn_carbamoylTrfase"/>
</dbReference>
<dbReference type="InterPro" id="IPR036901">
    <property type="entry name" value="Asp/Orn_carbamoylTrfase_sf"/>
</dbReference>
<dbReference type="InterPro" id="IPR002082">
    <property type="entry name" value="Asp_carbamoyltransf"/>
</dbReference>
<dbReference type="InterPro" id="IPR006131">
    <property type="entry name" value="Asp_carbamoyltransf_Asp/Orn-bd"/>
</dbReference>
<dbReference type="NCBIfam" id="TIGR00670">
    <property type="entry name" value="asp_carb_tr"/>
    <property type="match status" value="1"/>
</dbReference>
<dbReference type="NCBIfam" id="NF002032">
    <property type="entry name" value="PRK00856.1"/>
    <property type="match status" value="1"/>
</dbReference>
<dbReference type="PANTHER" id="PTHR45753:SF6">
    <property type="entry name" value="ASPARTATE CARBAMOYLTRANSFERASE"/>
    <property type="match status" value="1"/>
</dbReference>
<dbReference type="PANTHER" id="PTHR45753">
    <property type="entry name" value="ORNITHINE CARBAMOYLTRANSFERASE, MITOCHONDRIAL"/>
    <property type="match status" value="1"/>
</dbReference>
<dbReference type="Pfam" id="PF00185">
    <property type="entry name" value="OTCace"/>
    <property type="match status" value="1"/>
</dbReference>
<dbReference type="Pfam" id="PF02729">
    <property type="entry name" value="OTCace_N"/>
    <property type="match status" value="1"/>
</dbReference>
<dbReference type="PRINTS" id="PR00100">
    <property type="entry name" value="AOTCASE"/>
</dbReference>
<dbReference type="PRINTS" id="PR00101">
    <property type="entry name" value="ATCASE"/>
</dbReference>
<dbReference type="SUPFAM" id="SSF53671">
    <property type="entry name" value="Aspartate/ornithine carbamoyltransferase"/>
    <property type="match status" value="1"/>
</dbReference>
<dbReference type="PROSITE" id="PS00097">
    <property type="entry name" value="CARBAMOYLTRANSFERASE"/>
    <property type="match status" value="1"/>
</dbReference>
<reference key="1">
    <citation type="journal article" date="2001" name="Lancet">
        <title>Whole genome sequencing of meticillin-resistant Staphylococcus aureus.</title>
        <authorList>
            <person name="Kuroda M."/>
            <person name="Ohta T."/>
            <person name="Uchiyama I."/>
            <person name="Baba T."/>
            <person name="Yuzawa H."/>
            <person name="Kobayashi I."/>
            <person name="Cui L."/>
            <person name="Oguchi A."/>
            <person name="Aoki K."/>
            <person name="Nagai Y."/>
            <person name="Lian J.-Q."/>
            <person name="Ito T."/>
            <person name="Kanamori M."/>
            <person name="Matsumaru H."/>
            <person name="Maruyama A."/>
            <person name="Murakami H."/>
            <person name="Hosoyama A."/>
            <person name="Mizutani-Ui Y."/>
            <person name="Takahashi N.K."/>
            <person name="Sawano T."/>
            <person name="Inoue R."/>
            <person name="Kaito C."/>
            <person name="Sekimizu K."/>
            <person name="Hirakawa H."/>
            <person name="Kuhara S."/>
            <person name="Goto S."/>
            <person name="Yabuzaki J."/>
            <person name="Kanehisa M."/>
            <person name="Yamashita A."/>
            <person name="Oshima K."/>
            <person name="Furuya K."/>
            <person name="Yoshino C."/>
            <person name="Shiba T."/>
            <person name="Hattori M."/>
            <person name="Ogasawara N."/>
            <person name="Hayashi H."/>
            <person name="Hiramatsu K."/>
        </authorList>
    </citation>
    <scope>NUCLEOTIDE SEQUENCE [LARGE SCALE GENOMIC DNA]</scope>
    <source>
        <strain>N315</strain>
    </source>
</reference>
<reference key="2">
    <citation type="submission" date="2005-11" db="UniProtKB">
        <title>Shotgun proteomic analysis of total protein extract of S. aureus S30 versus N315.</title>
        <authorList>
            <person name="Stenz L."/>
        </authorList>
    </citation>
    <scope>IDENTIFICATION BY MASS SPECTROMETRY</scope>
</reference>
<reference key="3">
    <citation type="submission" date="2007-10" db="UniProtKB">
        <title>Shotgun proteomic analysis of total and membrane protein extracts of S. aureus strain N315.</title>
        <authorList>
            <person name="Vaezzadeh A.R."/>
            <person name="Deshusses J."/>
            <person name="Lescuyer P."/>
            <person name="Hochstrasser D.F."/>
        </authorList>
    </citation>
    <scope>IDENTIFICATION BY MASS SPECTROMETRY [LARGE SCALE ANALYSIS]</scope>
    <source>
        <strain>N315</strain>
    </source>
</reference>